<sequence>MRLGLFGGSFDPPHVGHLLVAQDALEALRLDHLLIIPAAQQPLKGAHQTSAHHRLAMVRACFEGVQGIEVDPVEIERGGLSFMVDTVEAVRRRWPDAHLHLLVGRDVVPTLPRWHDVDRLLSMVRLVVLTRDAAPQEGPLLIDAESDSGVVAEVLSTRQVDMSSTEIRSRVRDGRSIRGFVPDAVATYIASTGLYREYPRGSADTERSERA</sequence>
<comment type="function">
    <text evidence="1">Catalyzes the reversible adenylation of nicotinate mononucleotide (NaMN) to nicotinic acid adenine dinucleotide (NaAD).</text>
</comment>
<comment type="catalytic activity">
    <reaction evidence="1">
        <text>nicotinate beta-D-ribonucleotide + ATP + H(+) = deamido-NAD(+) + diphosphate</text>
        <dbReference type="Rhea" id="RHEA:22860"/>
        <dbReference type="ChEBI" id="CHEBI:15378"/>
        <dbReference type="ChEBI" id="CHEBI:30616"/>
        <dbReference type="ChEBI" id="CHEBI:33019"/>
        <dbReference type="ChEBI" id="CHEBI:57502"/>
        <dbReference type="ChEBI" id="CHEBI:58437"/>
        <dbReference type="EC" id="2.7.7.18"/>
    </reaction>
</comment>
<comment type="pathway">
    <text evidence="1">Cofactor biosynthesis; NAD(+) biosynthesis; deamido-NAD(+) from nicotinate D-ribonucleotide: step 1/1.</text>
</comment>
<comment type="similarity">
    <text evidence="1">Belongs to the NadD family.</text>
</comment>
<feature type="chain" id="PRO_1000204484" description="Probable nicotinate-nucleotide adenylyltransferase">
    <location>
        <begin position="1"/>
        <end position="211"/>
    </location>
</feature>
<organism>
    <name type="scientific">Gemmatimonas aurantiaca (strain DSM 14586 / JCM 11422 / NBRC 100505 / T-27)</name>
    <dbReference type="NCBI Taxonomy" id="379066"/>
    <lineage>
        <taxon>Bacteria</taxon>
        <taxon>Pseudomonadati</taxon>
        <taxon>Gemmatimonadota</taxon>
        <taxon>Gemmatimonadia</taxon>
        <taxon>Gemmatimonadales</taxon>
        <taxon>Gemmatimonadaceae</taxon>
        <taxon>Gemmatimonas</taxon>
    </lineage>
</organism>
<proteinExistence type="inferred from homology"/>
<keyword id="KW-0067">ATP-binding</keyword>
<keyword id="KW-0520">NAD</keyword>
<keyword id="KW-0547">Nucleotide-binding</keyword>
<keyword id="KW-0548">Nucleotidyltransferase</keyword>
<keyword id="KW-0662">Pyridine nucleotide biosynthesis</keyword>
<keyword id="KW-1185">Reference proteome</keyword>
<keyword id="KW-0808">Transferase</keyword>
<accession>C1A4H9</accession>
<gene>
    <name evidence="1" type="primary">nadD</name>
    <name type="ordered locus">GAU_1962</name>
</gene>
<name>NADD_GEMAT</name>
<dbReference type="EC" id="2.7.7.18" evidence="1"/>
<dbReference type="EMBL" id="AP009153">
    <property type="protein sequence ID" value="BAH39004.1"/>
    <property type="molecule type" value="Genomic_DNA"/>
</dbReference>
<dbReference type="RefSeq" id="WP_012683451.1">
    <property type="nucleotide sequence ID" value="NC_012489.1"/>
</dbReference>
<dbReference type="SMR" id="C1A4H9"/>
<dbReference type="STRING" id="379066.GAU_1962"/>
<dbReference type="KEGG" id="gau:GAU_1962"/>
<dbReference type="eggNOG" id="COG1057">
    <property type="taxonomic scope" value="Bacteria"/>
</dbReference>
<dbReference type="HOGENOM" id="CLU_069765_3_1_0"/>
<dbReference type="OrthoDB" id="5295945at2"/>
<dbReference type="UniPathway" id="UPA00253">
    <property type="reaction ID" value="UER00332"/>
</dbReference>
<dbReference type="Proteomes" id="UP000002209">
    <property type="component" value="Chromosome"/>
</dbReference>
<dbReference type="GO" id="GO:0005524">
    <property type="term" value="F:ATP binding"/>
    <property type="evidence" value="ECO:0007669"/>
    <property type="project" value="UniProtKB-KW"/>
</dbReference>
<dbReference type="GO" id="GO:0004515">
    <property type="term" value="F:nicotinate-nucleotide adenylyltransferase activity"/>
    <property type="evidence" value="ECO:0007669"/>
    <property type="project" value="UniProtKB-UniRule"/>
</dbReference>
<dbReference type="GO" id="GO:0009435">
    <property type="term" value="P:NAD biosynthetic process"/>
    <property type="evidence" value="ECO:0007669"/>
    <property type="project" value="UniProtKB-UniRule"/>
</dbReference>
<dbReference type="CDD" id="cd02165">
    <property type="entry name" value="NMNAT"/>
    <property type="match status" value="1"/>
</dbReference>
<dbReference type="Gene3D" id="3.40.50.620">
    <property type="entry name" value="HUPs"/>
    <property type="match status" value="1"/>
</dbReference>
<dbReference type="HAMAP" id="MF_00244">
    <property type="entry name" value="NaMN_adenylyltr"/>
    <property type="match status" value="1"/>
</dbReference>
<dbReference type="InterPro" id="IPR004821">
    <property type="entry name" value="Cyt_trans-like"/>
</dbReference>
<dbReference type="InterPro" id="IPR005248">
    <property type="entry name" value="NadD/NMNAT"/>
</dbReference>
<dbReference type="InterPro" id="IPR014729">
    <property type="entry name" value="Rossmann-like_a/b/a_fold"/>
</dbReference>
<dbReference type="NCBIfam" id="TIGR00125">
    <property type="entry name" value="cyt_tran_rel"/>
    <property type="match status" value="1"/>
</dbReference>
<dbReference type="NCBIfam" id="TIGR00482">
    <property type="entry name" value="nicotinate (nicotinamide) nucleotide adenylyltransferase"/>
    <property type="match status" value="1"/>
</dbReference>
<dbReference type="NCBIfam" id="NF000840">
    <property type="entry name" value="PRK00071.1-3"/>
    <property type="match status" value="1"/>
</dbReference>
<dbReference type="PANTHER" id="PTHR39321">
    <property type="entry name" value="NICOTINATE-NUCLEOTIDE ADENYLYLTRANSFERASE-RELATED"/>
    <property type="match status" value="1"/>
</dbReference>
<dbReference type="PANTHER" id="PTHR39321:SF3">
    <property type="entry name" value="PHOSPHOPANTETHEINE ADENYLYLTRANSFERASE"/>
    <property type="match status" value="1"/>
</dbReference>
<dbReference type="Pfam" id="PF01467">
    <property type="entry name" value="CTP_transf_like"/>
    <property type="match status" value="1"/>
</dbReference>
<dbReference type="SUPFAM" id="SSF52374">
    <property type="entry name" value="Nucleotidylyl transferase"/>
    <property type="match status" value="1"/>
</dbReference>
<reference key="1">
    <citation type="submission" date="2006-03" db="EMBL/GenBank/DDBJ databases">
        <title>Complete genome sequence of Gemmatimonas aurantiaca T-27 that represents a novel phylum Gemmatimonadetes.</title>
        <authorList>
            <person name="Takasaki K."/>
            <person name="Ichikawa N."/>
            <person name="Miura H."/>
            <person name="Matsushita S."/>
            <person name="Watanabe Y."/>
            <person name="Oguchi A."/>
            <person name="Ankai A."/>
            <person name="Yashiro I."/>
            <person name="Takahashi M."/>
            <person name="Terui Y."/>
            <person name="Fukui S."/>
            <person name="Yokoyama H."/>
            <person name="Tanikawa S."/>
            <person name="Hanada S."/>
            <person name="Kamagata Y."/>
            <person name="Fujita N."/>
        </authorList>
    </citation>
    <scope>NUCLEOTIDE SEQUENCE [LARGE SCALE GENOMIC DNA]</scope>
    <source>
        <strain>DSM 14586 / JCM 11422 / NBRC 100505 / T-27</strain>
    </source>
</reference>
<evidence type="ECO:0000255" key="1">
    <source>
        <dbReference type="HAMAP-Rule" id="MF_00244"/>
    </source>
</evidence>
<protein>
    <recommendedName>
        <fullName evidence="1">Probable nicotinate-nucleotide adenylyltransferase</fullName>
        <ecNumber evidence="1">2.7.7.18</ecNumber>
    </recommendedName>
    <alternativeName>
        <fullName evidence="1">Deamido-NAD(+) diphosphorylase</fullName>
    </alternativeName>
    <alternativeName>
        <fullName evidence="1">Deamido-NAD(+) pyrophosphorylase</fullName>
    </alternativeName>
    <alternativeName>
        <fullName evidence="1">Nicotinate mononucleotide adenylyltransferase</fullName>
        <shortName evidence="1">NaMN adenylyltransferase</shortName>
    </alternativeName>
</protein>